<reference key="1">
    <citation type="journal article" date="2010" name="ISME J.">
        <title>The complete genome sequence of the algal symbiont Dinoroseobacter shibae: a hitchhiker's guide to life in the sea.</title>
        <authorList>
            <person name="Wagner-Dobler I."/>
            <person name="Ballhausen B."/>
            <person name="Berger M."/>
            <person name="Brinkhoff T."/>
            <person name="Buchholz I."/>
            <person name="Bunk B."/>
            <person name="Cypionka H."/>
            <person name="Daniel R."/>
            <person name="Drepper T."/>
            <person name="Gerdts G."/>
            <person name="Hahnke S."/>
            <person name="Han C."/>
            <person name="Jahn D."/>
            <person name="Kalhoefer D."/>
            <person name="Kiss H."/>
            <person name="Klenk H.P."/>
            <person name="Kyrpides N."/>
            <person name="Liebl W."/>
            <person name="Liesegang H."/>
            <person name="Meincke L."/>
            <person name="Pati A."/>
            <person name="Petersen J."/>
            <person name="Piekarski T."/>
            <person name="Pommerenke C."/>
            <person name="Pradella S."/>
            <person name="Pukall R."/>
            <person name="Rabus R."/>
            <person name="Stackebrandt E."/>
            <person name="Thole S."/>
            <person name="Thompson L."/>
            <person name="Tielen P."/>
            <person name="Tomasch J."/>
            <person name="von Jan M."/>
            <person name="Wanphrut N."/>
            <person name="Wichels A."/>
            <person name="Zech H."/>
            <person name="Simon M."/>
        </authorList>
    </citation>
    <scope>NUCLEOTIDE SEQUENCE [LARGE SCALE GENOMIC DNA]</scope>
    <source>
        <strain>DSM 16493 / NCIMB 14021 / DFL 12</strain>
    </source>
</reference>
<organism>
    <name type="scientific">Dinoroseobacter shibae (strain DSM 16493 / NCIMB 14021 / DFL 12)</name>
    <dbReference type="NCBI Taxonomy" id="398580"/>
    <lineage>
        <taxon>Bacteria</taxon>
        <taxon>Pseudomonadati</taxon>
        <taxon>Pseudomonadota</taxon>
        <taxon>Alphaproteobacteria</taxon>
        <taxon>Rhodobacterales</taxon>
        <taxon>Roseobacteraceae</taxon>
        <taxon>Dinoroseobacter</taxon>
    </lineage>
</organism>
<gene>
    <name evidence="1" type="primary">rplA</name>
    <name type="ordered locus">Dshi_0261</name>
</gene>
<feature type="chain" id="PRO_1000086283" description="Large ribosomal subunit protein uL1">
    <location>
        <begin position="1"/>
        <end position="232"/>
    </location>
</feature>
<protein>
    <recommendedName>
        <fullName evidence="1">Large ribosomal subunit protein uL1</fullName>
    </recommendedName>
    <alternativeName>
        <fullName evidence="2">50S ribosomal protein L1</fullName>
    </alternativeName>
</protein>
<comment type="function">
    <text evidence="1">Binds directly to 23S rRNA. The L1 stalk is quite mobile in the ribosome, and is involved in E site tRNA release.</text>
</comment>
<comment type="function">
    <text evidence="1">Protein L1 is also a translational repressor protein, it controls the translation of the L11 operon by binding to its mRNA.</text>
</comment>
<comment type="subunit">
    <text evidence="1">Part of the 50S ribosomal subunit.</text>
</comment>
<comment type="similarity">
    <text evidence="1">Belongs to the universal ribosomal protein uL1 family.</text>
</comment>
<dbReference type="EMBL" id="CP000830">
    <property type="protein sequence ID" value="ABV92010.1"/>
    <property type="molecule type" value="Genomic_DNA"/>
</dbReference>
<dbReference type="RefSeq" id="WP_012176943.1">
    <property type="nucleotide sequence ID" value="NC_009952.1"/>
</dbReference>
<dbReference type="SMR" id="A8LLK0"/>
<dbReference type="STRING" id="398580.Dshi_0261"/>
<dbReference type="KEGG" id="dsh:Dshi_0261"/>
<dbReference type="eggNOG" id="COG0081">
    <property type="taxonomic scope" value="Bacteria"/>
</dbReference>
<dbReference type="HOGENOM" id="CLU_062853_0_0_5"/>
<dbReference type="OrthoDB" id="9803740at2"/>
<dbReference type="Proteomes" id="UP000006833">
    <property type="component" value="Chromosome"/>
</dbReference>
<dbReference type="GO" id="GO:0022625">
    <property type="term" value="C:cytosolic large ribosomal subunit"/>
    <property type="evidence" value="ECO:0007669"/>
    <property type="project" value="TreeGrafter"/>
</dbReference>
<dbReference type="GO" id="GO:0019843">
    <property type="term" value="F:rRNA binding"/>
    <property type="evidence" value="ECO:0007669"/>
    <property type="project" value="UniProtKB-UniRule"/>
</dbReference>
<dbReference type="GO" id="GO:0003735">
    <property type="term" value="F:structural constituent of ribosome"/>
    <property type="evidence" value="ECO:0007669"/>
    <property type="project" value="InterPro"/>
</dbReference>
<dbReference type="GO" id="GO:0000049">
    <property type="term" value="F:tRNA binding"/>
    <property type="evidence" value="ECO:0007669"/>
    <property type="project" value="UniProtKB-KW"/>
</dbReference>
<dbReference type="GO" id="GO:0006417">
    <property type="term" value="P:regulation of translation"/>
    <property type="evidence" value="ECO:0007669"/>
    <property type="project" value="UniProtKB-KW"/>
</dbReference>
<dbReference type="GO" id="GO:0006412">
    <property type="term" value="P:translation"/>
    <property type="evidence" value="ECO:0007669"/>
    <property type="project" value="UniProtKB-UniRule"/>
</dbReference>
<dbReference type="CDD" id="cd00403">
    <property type="entry name" value="Ribosomal_L1"/>
    <property type="match status" value="1"/>
</dbReference>
<dbReference type="FunFam" id="3.40.50.790:FF:000001">
    <property type="entry name" value="50S ribosomal protein L1"/>
    <property type="match status" value="1"/>
</dbReference>
<dbReference type="Gene3D" id="3.30.190.20">
    <property type="match status" value="1"/>
</dbReference>
<dbReference type="Gene3D" id="3.40.50.790">
    <property type="match status" value="1"/>
</dbReference>
<dbReference type="HAMAP" id="MF_01318_B">
    <property type="entry name" value="Ribosomal_uL1_B"/>
    <property type="match status" value="1"/>
</dbReference>
<dbReference type="InterPro" id="IPR005878">
    <property type="entry name" value="Ribosom_uL1_bac-type"/>
</dbReference>
<dbReference type="InterPro" id="IPR002143">
    <property type="entry name" value="Ribosomal_uL1"/>
</dbReference>
<dbReference type="InterPro" id="IPR023674">
    <property type="entry name" value="Ribosomal_uL1-like"/>
</dbReference>
<dbReference type="InterPro" id="IPR028364">
    <property type="entry name" value="Ribosomal_uL1/biogenesis"/>
</dbReference>
<dbReference type="InterPro" id="IPR016095">
    <property type="entry name" value="Ribosomal_uL1_3-a/b-sand"/>
</dbReference>
<dbReference type="InterPro" id="IPR023673">
    <property type="entry name" value="Ribosomal_uL1_CS"/>
</dbReference>
<dbReference type="NCBIfam" id="TIGR01169">
    <property type="entry name" value="rplA_bact"/>
    <property type="match status" value="1"/>
</dbReference>
<dbReference type="PANTHER" id="PTHR36427">
    <property type="entry name" value="54S RIBOSOMAL PROTEIN L1, MITOCHONDRIAL"/>
    <property type="match status" value="1"/>
</dbReference>
<dbReference type="PANTHER" id="PTHR36427:SF3">
    <property type="entry name" value="LARGE RIBOSOMAL SUBUNIT PROTEIN UL1M"/>
    <property type="match status" value="1"/>
</dbReference>
<dbReference type="Pfam" id="PF00687">
    <property type="entry name" value="Ribosomal_L1"/>
    <property type="match status" value="1"/>
</dbReference>
<dbReference type="PIRSF" id="PIRSF002155">
    <property type="entry name" value="Ribosomal_L1"/>
    <property type="match status" value="1"/>
</dbReference>
<dbReference type="SUPFAM" id="SSF56808">
    <property type="entry name" value="Ribosomal protein L1"/>
    <property type="match status" value="1"/>
</dbReference>
<dbReference type="PROSITE" id="PS01199">
    <property type="entry name" value="RIBOSOMAL_L1"/>
    <property type="match status" value="1"/>
</dbReference>
<proteinExistence type="inferred from homology"/>
<evidence type="ECO:0000255" key="1">
    <source>
        <dbReference type="HAMAP-Rule" id="MF_01318"/>
    </source>
</evidence>
<evidence type="ECO:0000305" key="2"/>
<keyword id="KW-1185">Reference proteome</keyword>
<keyword id="KW-0678">Repressor</keyword>
<keyword id="KW-0687">Ribonucleoprotein</keyword>
<keyword id="KW-0689">Ribosomal protein</keyword>
<keyword id="KW-0694">RNA-binding</keyword>
<keyword id="KW-0699">rRNA-binding</keyword>
<keyword id="KW-0810">Translation regulation</keyword>
<keyword id="KW-0820">tRNA-binding</keyword>
<name>RL1_DINSH</name>
<accession>A8LLK0</accession>
<sequence length="232" mass="23992">MAKLGKRTRAAREAVAGKSDLTVEEAVALIKANATSKFDETVEIAMCLGVDPRHADQMVRGVVSLPNGTGKTVRVAVFARGPKAEEAQAAGADIVGAEDLMETIQSGKIEFDRCIATPDMMPIVGRLGKILGPRNLMPNPKVGTVTMDVKAAVEAAKGGEVQFKAEKAGVVHAGVGKASFDEAKLVENVRAFVDAVSKAKPSGAKGSYMKKIALSSTMGPGVTVAVDSATGN</sequence>